<reference key="1">
    <citation type="journal article" date="2003" name="Lancet">
        <title>Genome sequence of Vibrio parahaemolyticus: a pathogenic mechanism distinct from that of V. cholerae.</title>
        <authorList>
            <person name="Makino K."/>
            <person name="Oshima K."/>
            <person name="Kurokawa K."/>
            <person name="Yokoyama K."/>
            <person name="Uda T."/>
            <person name="Tagomori K."/>
            <person name="Iijima Y."/>
            <person name="Najima M."/>
            <person name="Nakano M."/>
            <person name="Yamashita A."/>
            <person name="Kubota Y."/>
            <person name="Kimura S."/>
            <person name="Yasunaga T."/>
            <person name="Honda T."/>
            <person name="Shinagawa H."/>
            <person name="Hattori M."/>
            <person name="Iida T."/>
        </authorList>
    </citation>
    <scope>NUCLEOTIDE SEQUENCE [LARGE SCALE GENOMIC DNA]</scope>
    <source>
        <strain>RIMD 2210633</strain>
    </source>
</reference>
<comment type="function">
    <text evidence="1">The UvrABC repair system catalyzes the recognition and processing of DNA lesions. UvrC both incises the 5' and 3' sides of the lesion. The N-terminal half is responsible for the 3' incision and the C-terminal half is responsible for the 5' incision.</text>
</comment>
<comment type="subunit">
    <text evidence="1">Interacts with UvrB in an incision complex.</text>
</comment>
<comment type="subcellular location">
    <subcellularLocation>
        <location evidence="1">Cytoplasm</location>
    </subcellularLocation>
</comment>
<comment type="similarity">
    <text evidence="1">Belongs to the UvrC family.</text>
</comment>
<dbReference type="EMBL" id="BA000031">
    <property type="protein sequence ID" value="BAC60207.1"/>
    <property type="molecule type" value="Genomic_DNA"/>
</dbReference>
<dbReference type="RefSeq" id="NP_798323.1">
    <property type="nucleotide sequence ID" value="NC_004603.1"/>
</dbReference>
<dbReference type="RefSeq" id="WP_011105992.1">
    <property type="nucleotide sequence ID" value="NC_004603.1"/>
</dbReference>
<dbReference type="SMR" id="Q87NC4"/>
<dbReference type="GeneID" id="1189455"/>
<dbReference type="KEGG" id="vpa:VP1944"/>
<dbReference type="PATRIC" id="fig|223926.6.peg.1860"/>
<dbReference type="eggNOG" id="COG0322">
    <property type="taxonomic scope" value="Bacteria"/>
</dbReference>
<dbReference type="HOGENOM" id="CLU_014841_3_0_6"/>
<dbReference type="Proteomes" id="UP000002493">
    <property type="component" value="Chromosome 1"/>
</dbReference>
<dbReference type="GO" id="GO:0005737">
    <property type="term" value="C:cytoplasm"/>
    <property type="evidence" value="ECO:0007669"/>
    <property type="project" value="UniProtKB-SubCell"/>
</dbReference>
<dbReference type="GO" id="GO:0009380">
    <property type="term" value="C:excinuclease repair complex"/>
    <property type="evidence" value="ECO:0007669"/>
    <property type="project" value="InterPro"/>
</dbReference>
<dbReference type="GO" id="GO:0003677">
    <property type="term" value="F:DNA binding"/>
    <property type="evidence" value="ECO:0007669"/>
    <property type="project" value="UniProtKB-UniRule"/>
</dbReference>
<dbReference type="GO" id="GO:0009381">
    <property type="term" value="F:excinuclease ABC activity"/>
    <property type="evidence" value="ECO:0007669"/>
    <property type="project" value="UniProtKB-UniRule"/>
</dbReference>
<dbReference type="GO" id="GO:0006289">
    <property type="term" value="P:nucleotide-excision repair"/>
    <property type="evidence" value="ECO:0007669"/>
    <property type="project" value="UniProtKB-UniRule"/>
</dbReference>
<dbReference type="GO" id="GO:0009432">
    <property type="term" value="P:SOS response"/>
    <property type="evidence" value="ECO:0007669"/>
    <property type="project" value="UniProtKB-UniRule"/>
</dbReference>
<dbReference type="CDD" id="cd10434">
    <property type="entry name" value="GIY-YIG_UvrC_Cho"/>
    <property type="match status" value="1"/>
</dbReference>
<dbReference type="FunFam" id="1.10.150.20:FF:000005">
    <property type="entry name" value="UvrABC system protein C"/>
    <property type="match status" value="1"/>
</dbReference>
<dbReference type="FunFam" id="3.30.420.340:FF:000001">
    <property type="entry name" value="UvrABC system protein C"/>
    <property type="match status" value="1"/>
</dbReference>
<dbReference type="FunFam" id="3.40.1440.10:FF:000001">
    <property type="entry name" value="UvrABC system protein C"/>
    <property type="match status" value="1"/>
</dbReference>
<dbReference type="FunFam" id="4.10.860.10:FF:000002">
    <property type="entry name" value="UvrABC system protein C"/>
    <property type="match status" value="1"/>
</dbReference>
<dbReference type="Gene3D" id="1.10.150.20">
    <property type="entry name" value="5' to 3' exonuclease, C-terminal subdomain"/>
    <property type="match status" value="1"/>
</dbReference>
<dbReference type="Gene3D" id="3.40.1440.10">
    <property type="entry name" value="GIY-YIG endonuclease"/>
    <property type="match status" value="1"/>
</dbReference>
<dbReference type="Gene3D" id="4.10.860.10">
    <property type="entry name" value="UVR domain"/>
    <property type="match status" value="1"/>
</dbReference>
<dbReference type="Gene3D" id="3.30.420.340">
    <property type="entry name" value="UvrC, RNAse H endonuclease domain"/>
    <property type="match status" value="1"/>
</dbReference>
<dbReference type="HAMAP" id="MF_00203">
    <property type="entry name" value="UvrC"/>
    <property type="match status" value="1"/>
</dbReference>
<dbReference type="InterPro" id="IPR000305">
    <property type="entry name" value="GIY-YIG_endonuc"/>
</dbReference>
<dbReference type="InterPro" id="IPR035901">
    <property type="entry name" value="GIY-YIG_endonuc_sf"/>
</dbReference>
<dbReference type="InterPro" id="IPR047296">
    <property type="entry name" value="GIY-YIG_UvrC_Cho"/>
</dbReference>
<dbReference type="InterPro" id="IPR003583">
    <property type="entry name" value="Hlx-hairpin-Hlx_DNA-bd_motif"/>
</dbReference>
<dbReference type="InterPro" id="IPR010994">
    <property type="entry name" value="RuvA_2-like"/>
</dbReference>
<dbReference type="InterPro" id="IPR001943">
    <property type="entry name" value="UVR_dom"/>
</dbReference>
<dbReference type="InterPro" id="IPR036876">
    <property type="entry name" value="UVR_dom_sf"/>
</dbReference>
<dbReference type="InterPro" id="IPR050066">
    <property type="entry name" value="UvrABC_protein_C"/>
</dbReference>
<dbReference type="InterPro" id="IPR004791">
    <property type="entry name" value="UvrC"/>
</dbReference>
<dbReference type="InterPro" id="IPR001162">
    <property type="entry name" value="UvrC_RNase_H_dom"/>
</dbReference>
<dbReference type="InterPro" id="IPR038476">
    <property type="entry name" value="UvrC_RNase_H_dom_sf"/>
</dbReference>
<dbReference type="NCBIfam" id="NF001824">
    <property type="entry name" value="PRK00558.1-5"/>
    <property type="match status" value="1"/>
</dbReference>
<dbReference type="NCBIfam" id="TIGR00194">
    <property type="entry name" value="uvrC"/>
    <property type="match status" value="1"/>
</dbReference>
<dbReference type="PANTHER" id="PTHR30562:SF1">
    <property type="entry name" value="UVRABC SYSTEM PROTEIN C"/>
    <property type="match status" value="1"/>
</dbReference>
<dbReference type="PANTHER" id="PTHR30562">
    <property type="entry name" value="UVRC/OXIDOREDUCTASE"/>
    <property type="match status" value="1"/>
</dbReference>
<dbReference type="Pfam" id="PF01541">
    <property type="entry name" value="GIY-YIG"/>
    <property type="match status" value="1"/>
</dbReference>
<dbReference type="Pfam" id="PF14520">
    <property type="entry name" value="HHH_5"/>
    <property type="match status" value="1"/>
</dbReference>
<dbReference type="Pfam" id="PF02151">
    <property type="entry name" value="UVR"/>
    <property type="match status" value="1"/>
</dbReference>
<dbReference type="Pfam" id="PF22920">
    <property type="entry name" value="UvrC_RNaseH"/>
    <property type="match status" value="1"/>
</dbReference>
<dbReference type="Pfam" id="PF08459">
    <property type="entry name" value="UvrC_RNaseH_dom"/>
    <property type="match status" value="1"/>
</dbReference>
<dbReference type="SMART" id="SM00465">
    <property type="entry name" value="GIYc"/>
    <property type="match status" value="1"/>
</dbReference>
<dbReference type="SMART" id="SM00278">
    <property type="entry name" value="HhH1"/>
    <property type="match status" value="2"/>
</dbReference>
<dbReference type="SUPFAM" id="SSF46600">
    <property type="entry name" value="C-terminal UvrC-binding domain of UvrB"/>
    <property type="match status" value="1"/>
</dbReference>
<dbReference type="SUPFAM" id="SSF82771">
    <property type="entry name" value="GIY-YIG endonuclease"/>
    <property type="match status" value="1"/>
</dbReference>
<dbReference type="SUPFAM" id="SSF47781">
    <property type="entry name" value="RuvA domain 2-like"/>
    <property type="match status" value="1"/>
</dbReference>
<dbReference type="PROSITE" id="PS50164">
    <property type="entry name" value="GIY_YIG"/>
    <property type="match status" value="1"/>
</dbReference>
<dbReference type="PROSITE" id="PS50151">
    <property type="entry name" value="UVR"/>
    <property type="match status" value="1"/>
</dbReference>
<dbReference type="PROSITE" id="PS50165">
    <property type="entry name" value="UVRC"/>
    <property type="match status" value="1"/>
</dbReference>
<evidence type="ECO:0000255" key="1">
    <source>
        <dbReference type="HAMAP-Rule" id="MF_00203"/>
    </source>
</evidence>
<proteinExistence type="inferred from homology"/>
<feature type="chain" id="PRO_0000138359" description="UvrABC system protein C">
    <location>
        <begin position="1"/>
        <end position="610"/>
    </location>
</feature>
<feature type="domain" description="GIY-YIG" evidence="1">
    <location>
        <begin position="16"/>
        <end position="94"/>
    </location>
</feature>
<feature type="domain" description="UVR" evidence="1">
    <location>
        <begin position="204"/>
        <end position="239"/>
    </location>
</feature>
<accession>Q87NC4</accession>
<sequence length="610" mass="69214">MNPPFDSASFLKTVTHQPGVYRMYNADAVVIYVGKAKDLQKRLSSYFRKKVDSEKTRALVSNIAKIDVTVTHTETEALILEHNYIKQYLPKYNVLLRDDKSYPYILISGHKHPRLSMHRGAKKRKGEYFGPYPDSGAVRETLHLLQKIFPVRQCEDTVYSNRTRPCLMYQIGRCAGPCVSSIISDEEYAELVGFVRLFLQGKDQQVLKQLIEKMEVASQQLRFEDAAKFRDQIQAIRRVQEQQYVSEDSMDDMDVLGFAQENGIACIHILMIRQGKVLGSRSHFPKIPQNTSQQEVFDSFLTQYYLSHNEARTIPSRIILNQELADDLEPIQKALSEVAGRKVHFHTSPTGARGRYLKLSNTNALTAITTKINHKMTINQRFKALRETLGMESIMRMECFDISHTMGESTIASCVVFNNEGPVKQEYRRYNITGITGGDDYAAMGQALERRYSKQLDVEKIPDIIFIDGGKGQLNRAHEIIAQYWGDWPKRPIMIGIAKGVTRKPGLETLITVDGEEFNLPSDAPALHLIQHIRDESHNHAIAGHRAKRGKTRRTSALEGIEGVGPKRRQALLKYMGGLQELKRASVEEIAKVPGISHSLAEIIFQALKQ</sequence>
<gene>
    <name evidence="1" type="primary">uvrC</name>
    <name type="ordered locus">VP1944</name>
</gene>
<keyword id="KW-0963">Cytoplasm</keyword>
<keyword id="KW-0227">DNA damage</keyword>
<keyword id="KW-0228">DNA excision</keyword>
<keyword id="KW-0234">DNA repair</keyword>
<keyword id="KW-0267">Excision nuclease</keyword>
<keyword id="KW-0742">SOS response</keyword>
<name>UVRC_VIBPA</name>
<protein>
    <recommendedName>
        <fullName evidence="1">UvrABC system protein C</fullName>
        <shortName evidence="1">Protein UvrC</shortName>
    </recommendedName>
    <alternativeName>
        <fullName evidence="1">Excinuclease ABC subunit C</fullName>
    </alternativeName>
</protein>
<organism>
    <name type="scientific">Vibrio parahaemolyticus serotype O3:K6 (strain RIMD 2210633)</name>
    <dbReference type="NCBI Taxonomy" id="223926"/>
    <lineage>
        <taxon>Bacteria</taxon>
        <taxon>Pseudomonadati</taxon>
        <taxon>Pseudomonadota</taxon>
        <taxon>Gammaproteobacteria</taxon>
        <taxon>Vibrionales</taxon>
        <taxon>Vibrionaceae</taxon>
        <taxon>Vibrio</taxon>
    </lineage>
</organism>